<sequence>MTSSAIRINKKPVVLSGIQPSSGMLHLGNYLGALKSFGRMQDDYTTYFMLANLHSMTFPQNPEVLRENTIRIAAQCIAAGIDPAKSIVFLQSDVYQHNQLAWVLGNVCTFGEAARMTQFKDKSGKQGNISTGLFTYPILMASDILLYDSAFVPVGADQKQHLELTRTLARRFNAQYGQTFLVPQPFECSIRIYDLQDPAVKMSKSSATESGTIFLLDSPDKIVKKIMRSVTDSEDVIGYDRETKPGVSNLVVMYSCLTDCTIEQTVNIYSGKKYSVLKKDLSDILVEVCTTIATRTNELLDDKNYIRKILVTASEQARGVAQKTIDRVYEKLGVY</sequence>
<dbReference type="EC" id="6.1.1.2" evidence="1"/>
<dbReference type="EMBL" id="BX251412">
    <property type="protein sequence ID" value="CAD67364.1"/>
    <property type="molecule type" value="Genomic_DNA"/>
</dbReference>
<dbReference type="RefSeq" id="WP_011096642.1">
    <property type="nucleotide sequence ID" value="NC_004551.1"/>
</dbReference>
<dbReference type="SMR" id="Q83HC3"/>
<dbReference type="GeneID" id="67388480"/>
<dbReference type="KEGG" id="tws:TW705"/>
<dbReference type="HOGENOM" id="CLU_029244_1_1_11"/>
<dbReference type="GO" id="GO:0005829">
    <property type="term" value="C:cytosol"/>
    <property type="evidence" value="ECO:0007669"/>
    <property type="project" value="TreeGrafter"/>
</dbReference>
<dbReference type="GO" id="GO:0005524">
    <property type="term" value="F:ATP binding"/>
    <property type="evidence" value="ECO:0007669"/>
    <property type="project" value="UniProtKB-UniRule"/>
</dbReference>
<dbReference type="GO" id="GO:0004830">
    <property type="term" value="F:tryptophan-tRNA ligase activity"/>
    <property type="evidence" value="ECO:0007669"/>
    <property type="project" value="UniProtKB-UniRule"/>
</dbReference>
<dbReference type="GO" id="GO:0006436">
    <property type="term" value="P:tryptophanyl-tRNA aminoacylation"/>
    <property type="evidence" value="ECO:0007669"/>
    <property type="project" value="UniProtKB-UniRule"/>
</dbReference>
<dbReference type="CDD" id="cd00806">
    <property type="entry name" value="TrpRS_core"/>
    <property type="match status" value="1"/>
</dbReference>
<dbReference type="Gene3D" id="3.40.50.620">
    <property type="entry name" value="HUPs"/>
    <property type="match status" value="1"/>
</dbReference>
<dbReference type="Gene3D" id="1.10.240.10">
    <property type="entry name" value="Tyrosyl-Transfer RNA Synthetase"/>
    <property type="match status" value="1"/>
</dbReference>
<dbReference type="HAMAP" id="MF_00140_B">
    <property type="entry name" value="Trp_tRNA_synth_B"/>
    <property type="match status" value="1"/>
</dbReference>
<dbReference type="InterPro" id="IPR001412">
    <property type="entry name" value="aa-tRNA-synth_I_CS"/>
</dbReference>
<dbReference type="InterPro" id="IPR002305">
    <property type="entry name" value="aa-tRNA-synth_Ic"/>
</dbReference>
<dbReference type="InterPro" id="IPR014729">
    <property type="entry name" value="Rossmann-like_a/b/a_fold"/>
</dbReference>
<dbReference type="InterPro" id="IPR002306">
    <property type="entry name" value="Trp-tRNA-ligase"/>
</dbReference>
<dbReference type="InterPro" id="IPR024109">
    <property type="entry name" value="Trp-tRNA-ligase_bac-type"/>
</dbReference>
<dbReference type="InterPro" id="IPR050203">
    <property type="entry name" value="Trp-tRNA_synthetase"/>
</dbReference>
<dbReference type="NCBIfam" id="TIGR00233">
    <property type="entry name" value="trpS"/>
    <property type="match status" value="1"/>
</dbReference>
<dbReference type="PANTHER" id="PTHR43766">
    <property type="entry name" value="TRYPTOPHAN--TRNA LIGASE, MITOCHONDRIAL"/>
    <property type="match status" value="1"/>
</dbReference>
<dbReference type="PANTHER" id="PTHR43766:SF1">
    <property type="entry name" value="TRYPTOPHAN--TRNA LIGASE, MITOCHONDRIAL"/>
    <property type="match status" value="1"/>
</dbReference>
<dbReference type="Pfam" id="PF00579">
    <property type="entry name" value="tRNA-synt_1b"/>
    <property type="match status" value="1"/>
</dbReference>
<dbReference type="PRINTS" id="PR01039">
    <property type="entry name" value="TRNASYNTHTRP"/>
</dbReference>
<dbReference type="SUPFAM" id="SSF52374">
    <property type="entry name" value="Nucleotidylyl transferase"/>
    <property type="match status" value="1"/>
</dbReference>
<dbReference type="PROSITE" id="PS00178">
    <property type="entry name" value="AA_TRNA_LIGASE_I"/>
    <property type="match status" value="1"/>
</dbReference>
<evidence type="ECO:0000255" key="1">
    <source>
        <dbReference type="HAMAP-Rule" id="MF_00140"/>
    </source>
</evidence>
<gene>
    <name evidence="1" type="primary">trpS</name>
    <name type="ordered locus">TW705</name>
</gene>
<feature type="chain" id="PRO_0000136702" description="Tryptophan--tRNA ligase">
    <location>
        <begin position="1"/>
        <end position="335"/>
    </location>
</feature>
<feature type="short sequence motif" description="'HIGH' region" evidence="1">
    <location>
        <begin position="20"/>
        <end position="29"/>
    </location>
</feature>
<feature type="short sequence motif" description="'KMSKS' region" evidence="1">
    <location>
        <begin position="201"/>
        <end position="205"/>
    </location>
</feature>
<feature type="binding site" evidence="1">
    <location>
        <begin position="19"/>
        <end position="21"/>
    </location>
    <ligand>
        <name>ATP</name>
        <dbReference type="ChEBI" id="CHEBI:30616"/>
    </ligand>
</feature>
<feature type="binding site" evidence="1">
    <location>
        <begin position="28"/>
        <end position="29"/>
    </location>
    <ligand>
        <name>ATP</name>
        <dbReference type="ChEBI" id="CHEBI:30616"/>
    </ligand>
</feature>
<feature type="binding site" evidence="1">
    <location>
        <position position="143"/>
    </location>
    <ligand>
        <name>L-tryptophan</name>
        <dbReference type="ChEBI" id="CHEBI:57912"/>
    </ligand>
</feature>
<feature type="binding site" evidence="1">
    <location>
        <begin position="155"/>
        <end position="157"/>
    </location>
    <ligand>
        <name>ATP</name>
        <dbReference type="ChEBI" id="CHEBI:30616"/>
    </ligand>
</feature>
<feature type="binding site" evidence="1">
    <location>
        <position position="192"/>
    </location>
    <ligand>
        <name>ATP</name>
        <dbReference type="ChEBI" id="CHEBI:30616"/>
    </ligand>
</feature>
<feature type="binding site" evidence="1">
    <location>
        <begin position="201"/>
        <end position="205"/>
    </location>
    <ligand>
        <name>ATP</name>
        <dbReference type="ChEBI" id="CHEBI:30616"/>
    </ligand>
</feature>
<reference key="1">
    <citation type="journal article" date="2003" name="Lancet">
        <title>Sequencing and analysis of the genome of the Whipple's disease bacterium Tropheryma whipplei.</title>
        <authorList>
            <person name="Bentley S.D."/>
            <person name="Maiwald M."/>
            <person name="Murphy L.D."/>
            <person name="Pallen M.J."/>
            <person name="Yeats C.A."/>
            <person name="Dover L.G."/>
            <person name="Norbertczak H.T."/>
            <person name="Besra G.S."/>
            <person name="Quail M.A."/>
            <person name="Harris D.E."/>
            <person name="von Herbay A."/>
            <person name="Goble A."/>
            <person name="Rutter S."/>
            <person name="Squares R."/>
            <person name="Squares S."/>
            <person name="Barrell B.G."/>
            <person name="Parkhill J."/>
            <person name="Relman D.A."/>
        </authorList>
    </citation>
    <scope>NUCLEOTIDE SEQUENCE [LARGE SCALE GENOMIC DNA]</scope>
    <source>
        <strain>TW08/27</strain>
    </source>
</reference>
<comment type="function">
    <text evidence="1">Catalyzes the attachment of tryptophan to tRNA(Trp).</text>
</comment>
<comment type="catalytic activity">
    <reaction evidence="1">
        <text>tRNA(Trp) + L-tryptophan + ATP = L-tryptophyl-tRNA(Trp) + AMP + diphosphate + H(+)</text>
        <dbReference type="Rhea" id="RHEA:24080"/>
        <dbReference type="Rhea" id="RHEA-COMP:9671"/>
        <dbReference type="Rhea" id="RHEA-COMP:9705"/>
        <dbReference type="ChEBI" id="CHEBI:15378"/>
        <dbReference type="ChEBI" id="CHEBI:30616"/>
        <dbReference type="ChEBI" id="CHEBI:33019"/>
        <dbReference type="ChEBI" id="CHEBI:57912"/>
        <dbReference type="ChEBI" id="CHEBI:78442"/>
        <dbReference type="ChEBI" id="CHEBI:78535"/>
        <dbReference type="ChEBI" id="CHEBI:456215"/>
        <dbReference type="EC" id="6.1.1.2"/>
    </reaction>
</comment>
<comment type="subunit">
    <text evidence="1">Homodimer.</text>
</comment>
<comment type="subcellular location">
    <subcellularLocation>
        <location evidence="1">Cytoplasm</location>
    </subcellularLocation>
</comment>
<comment type="similarity">
    <text evidence="1">Belongs to the class-I aminoacyl-tRNA synthetase family.</text>
</comment>
<accession>Q83HC3</accession>
<organism>
    <name type="scientific">Tropheryma whipplei (strain TW08/27)</name>
    <name type="common">Whipple's bacillus</name>
    <dbReference type="NCBI Taxonomy" id="218496"/>
    <lineage>
        <taxon>Bacteria</taxon>
        <taxon>Bacillati</taxon>
        <taxon>Actinomycetota</taxon>
        <taxon>Actinomycetes</taxon>
        <taxon>Micrococcales</taxon>
        <taxon>Tropherymataceae</taxon>
        <taxon>Tropheryma</taxon>
    </lineage>
</organism>
<protein>
    <recommendedName>
        <fullName evidence="1">Tryptophan--tRNA ligase</fullName>
        <ecNumber evidence="1">6.1.1.2</ecNumber>
    </recommendedName>
    <alternativeName>
        <fullName evidence="1">Tryptophanyl-tRNA synthetase</fullName>
        <shortName evidence="1">TrpRS</shortName>
    </alternativeName>
</protein>
<keyword id="KW-0030">Aminoacyl-tRNA synthetase</keyword>
<keyword id="KW-0067">ATP-binding</keyword>
<keyword id="KW-0963">Cytoplasm</keyword>
<keyword id="KW-0436">Ligase</keyword>
<keyword id="KW-0547">Nucleotide-binding</keyword>
<keyword id="KW-0648">Protein biosynthesis</keyword>
<proteinExistence type="inferred from homology"/>
<name>SYW_TROW8</name>